<organism>
    <name type="scientific">Paramecium tetraurelia</name>
    <dbReference type="NCBI Taxonomy" id="5888"/>
    <lineage>
        <taxon>Eukaryota</taxon>
        <taxon>Sar</taxon>
        <taxon>Alveolata</taxon>
        <taxon>Ciliophora</taxon>
        <taxon>Intramacronucleata</taxon>
        <taxon>Oligohymenophorea</taxon>
        <taxon>Peniculida</taxon>
        <taxon>Parameciidae</taxon>
        <taxon>Paramecium</taxon>
    </lineage>
</organism>
<name>NU5M_PARTE</name>
<keyword id="KW-0249">Electron transport</keyword>
<keyword id="KW-0472">Membrane</keyword>
<keyword id="KW-0496">Mitochondrion</keyword>
<keyword id="KW-0999">Mitochondrion inner membrane</keyword>
<keyword id="KW-0520">NAD</keyword>
<keyword id="KW-0679">Respiratory chain</keyword>
<keyword id="KW-1278">Translocase</keyword>
<keyword id="KW-0812">Transmembrane</keyword>
<keyword id="KW-1133">Transmembrane helix</keyword>
<keyword id="KW-0813">Transport</keyword>
<keyword id="KW-0830">Ubiquinone</keyword>
<proteinExistence type="inferred from homology"/>
<evidence type="ECO:0000250" key="1"/>
<evidence type="ECO:0000255" key="2"/>
<evidence type="ECO:0000305" key="3"/>
<comment type="function">
    <text evidence="1">Core subunit of the mitochondrial membrane respiratory chain NADH dehydrogenase (Complex I) that is believed to belong to the minimal assembly required for catalysis. Complex I functions in the transfer of electrons from NADH to the respiratory chain. The immediate electron acceptor for the enzyme is believed to be ubiquinone (By similarity).</text>
</comment>
<comment type="catalytic activity">
    <reaction>
        <text>a ubiquinone + NADH + 5 H(+)(in) = a ubiquinol + NAD(+) + 4 H(+)(out)</text>
        <dbReference type="Rhea" id="RHEA:29091"/>
        <dbReference type="Rhea" id="RHEA-COMP:9565"/>
        <dbReference type="Rhea" id="RHEA-COMP:9566"/>
        <dbReference type="ChEBI" id="CHEBI:15378"/>
        <dbReference type="ChEBI" id="CHEBI:16389"/>
        <dbReference type="ChEBI" id="CHEBI:17976"/>
        <dbReference type="ChEBI" id="CHEBI:57540"/>
        <dbReference type="ChEBI" id="CHEBI:57945"/>
        <dbReference type="EC" id="7.1.1.2"/>
    </reaction>
</comment>
<comment type="subcellular location">
    <subcellularLocation>
        <location evidence="1">Mitochondrion inner membrane</location>
        <topology evidence="1">Multi-pass membrane protein</topology>
    </subcellularLocation>
</comment>
<comment type="similarity">
    <text evidence="3">Belongs to the complex I subunit 5 family.</text>
</comment>
<protein>
    <recommendedName>
        <fullName>NADH-ubiquinone oxidoreductase chain 5</fullName>
        <ecNumber>7.1.1.2</ecNumber>
    </recommendedName>
    <alternativeName>
        <fullName>NADH dehydrogenase subunit 5</fullName>
    </alternativeName>
</protein>
<dbReference type="EC" id="7.1.1.2"/>
<dbReference type="EMBL" id="X15917">
    <property type="protein sequence ID" value="CAA34053.1"/>
    <property type="molecule type" value="Genomic_DNA"/>
</dbReference>
<dbReference type="PIR" id="S07744">
    <property type="entry name" value="S07744"/>
</dbReference>
<dbReference type="SMR" id="P15584"/>
<dbReference type="GO" id="GO:0005743">
    <property type="term" value="C:mitochondrial inner membrane"/>
    <property type="evidence" value="ECO:0007669"/>
    <property type="project" value="UniProtKB-SubCell"/>
</dbReference>
<dbReference type="GO" id="GO:0008137">
    <property type="term" value="F:NADH dehydrogenase (ubiquinone) activity"/>
    <property type="evidence" value="ECO:0007669"/>
    <property type="project" value="UniProtKB-EC"/>
</dbReference>
<dbReference type="GO" id="GO:0042773">
    <property type="term" value="P:ATP synthesis coupled electron transport"/>
    <property type="evidence" value="ECO:0007669"/>
    <property type="project" value="InterPro"/>
</dbReference>
<dbReference type="InterPro" id="IPR001750">
    <property type="entry name" value="ND/Mrp_TM"/>
</dbReference>
<dbReference type="InterPro" id="IPR003945">
    <property type="entry name" value="NU5C-like"/>
</dbReference>
<dbReference type="InterPro" id="IPR001516">
    <property type="entry name" value="Proton_antipo_N"/>
</dbReference>
<dbReference type="PANTHER" id="PTHR42829">
    <property type="entry name" value="NADH-UBIQUINONE OXIDOREDUCTASE CHAIN 5"/>
    <property type="match status" value="1"/>
</dbReference>
<dbReference type="PANTHER" id="PTHR42829:SF2">
    <property type="entry name" value="NADH-UBIQUINONE OXIDOREDUCTASE CHAIN 5"/>
    <property type="match status" value="1"/>
</dbReference>
<dbReference type="Pfam" id="PF00361">
    <property type="entry name" value="Proton_antipo_M"/>
    <property type="match status" value="1"/>
</dbReference>
<dbReference type="Pfam" id="PF00662">
    <property type="entry name" value="Proton_antipo_N"/>
    <property type="match status" value="1"/>
</dbReference>
<dbReference type="PRINTS" id="PR01434">
    <property type="entry name" value="NADHDHGNASE5"/>
</dbReference>
<accession>P15584</accession>
<sequence>MFSFFFSFYALSVIFSLLFKHFLSSKGVFLLNTTSIGLFWAYSLSNLNLFFIKNKLIAIHLFRWFPLSAGYLVNFSFYIDTVAYSFTLLTLTIGVFVNLYTYSYFRYEPHISRLISLINAFIASMIILVNSGNLVVFFFGWELIGITSFFLINFWGERAPTFKSAFKAFSFNKFSDSAVLIALILIYANVHDLNFEAILNVSHLYSEMKLGSTPQINSWNLISFCLLFAAFVKSAQFGFHVWLPDSMEAPVPASALIHSATLVSAGVFLIMRFYPILELSLYFKLVTALVGALTALAGGLSAVFQTDLKKILAYSTISHCGFLIFLCSFGNFKLVIVYLFVHGFFKAISFLCVGNLIRFSKSYQDLRRMGSFFKYLPAEFFFLVFSLLNLSGLPFFFGFYSKTLLFMISDVLYFRDAIFCMILLSCITGLFYSFNILYYSFFDSKKARKSIYAGVISEYLRSYYYSNTTMASNIAIFLLIVSSCLLCAYLINFYLLSLSTATDFYLVYVKTFSFTLAPLSEAALLNYSFFYWIIAIFFVILVLFSYYQKKTTAEVSLAGFFDFFLGGFFF</sequence>
<geneLocation type="mitochondrion"/>
<feature type="chain" id="PRO_0000118126" description="NADH-ubiquinone oxidoreductase chain 5">
    <location>
        <begin position="1"/>
        <end position="570"/>
    </location>
</feature>
<feature type="transmembrane region" description="Helical" evidence="2">
    <location>
        <begin position="2"/>
        <end position="22"/>
    </location>
</feature>
<feature type="transmembrane region" description="Helical" evidence="2">
    <location>
        <begin position="27"/>
        <end position="47"/>
    </location>
</feature>
<feature type="transmembrane region" description="Helical" evidence="2">
    <location>
        <begin position="56"/>
        <end position="76"/>
    </location>
</feature>
<feature type="transmembrane region" description="Helical" evidence="2">
    <location>
        <begin position="77"/>
        <end position="97"/>
    </location>
</feature>
<feature type="transmembrane region" description="Helical" evidence="2">
    <location>
        <begin position="109"/>
        <end position="129"/>
    </location>
</feature>
<feature type="transmembrane region" description="Helical" evidence="2">
    <location>
        <begin position="134"/>
        <end position="154"/>
    </location>
</feature>
<feature type="transmembrane region" description="Helical" evidence="2">
    <location>
        <begin position="179"/>
        <end position="199"/>
    </location>
</feature>
<feature type="transmembrane region" description="Helical" evidence="2">
    <location>
        <begin position="221"/>
        <end position="241"/>
    </location>
</feature>
<feature type="transmembrane region" description="Helical" evidence="2">
    <location>
        <begin position="251"/>
        <end position="271"/>
    </location>
</feature>
<feature type="transmembrane region" description="Helical" evidence="2">
    <location>
        <begin position="285"/>
        <end position="305"/>
    </location>
</feature>
<feature type="transmembrane region" description="Helical" evidence="2">
    <location>
        <begin position="311"/>
        <end position="330"/>
    </location>
</feature>
<feature type="transmembrane region" description="Helical" evidence="2">
    <location>
        <begin position="335"/>
        <end position="357"/>
    </location>
</feature>
<feature type="transmembrane region" description="Helical" evidence="2">
    <location>
        <begin position="380"/>
        <end position="400"/>
    </location>
</feature>
<feature type="transmembrane region" description="Helical" evidence="2">
    <location>
        <begin position="417"/>
        <end position="437"/>
    </location>
</feature>
<feature type="transmembrane region" description="Helical" evidence="2">
    <location>
        <begin position="476"/>
        <end position="496"/>
    </location>
</feature>
<feature type="transmembrane region" description="Helical" evidence="2">
    <location>
        <begin position="524"/>
        <end position="544"/>
    </location>
</feature>
<reference key="1">
    <citation type="journal article" date="1990" name="Nucleic Acids Res.">
        <title>Nucleotide sequence of the mitochondrial genome of Paramecium.</title>
        <authorList>
            <person name="Pritchard A.E."/>
            <person name="Seilhamer J.J."/>
            <person name="Mahalingam R."/>
            <person name="Sable C.L."/>
            <person name="Venuti S.E."/>
            <person name="Cummings D.J."/>
        </authorList>
    </citation>
    <scope>NUCLEOTIDE SEQUENCE [GENOMIC DNA]</scope>
    <source>
        <strain>Stock 51</strain>
    </source>
</reference>
<gene>
    <name type="primary">ND5</name>
    <name type="synonym">NDH5</name>
</gene>